<comment type="similarity">
    <text evidence="1">Belongs to the CinA family.</text>
</comment>
<reference key="1">
    <citation type="submission" date="2006-12" db="EMBL/GenBank/DDBJ databases">
        <title>Complete sequence of Mycobacterium vanbaalenii PYR-1.</title>
        <authorList>
            <consortium name="US DOE Joint Genome Institute"/>
            <person name="Copeland A."/>
            <person name="Lucas S."/>
            <person name="Lapidus A."/>
            <person name="Barry K."/>
            <person name="Detter J.C."/>
            <person name="Glavina del Rio T."/>
            <person name="Hammon N."/>
            <person name="Israni S."/>
            <person name="Dalin E."/>
            <person name="Tice H."/>
            <person name="Pitluck S."/>
            <person name="Singan V."/>
            <person name="Schmutz J."/>
            <person name="Larimer F."/>
            <person name="Land M."/>
            <person name="Hauser L."/>
            <person name="Kyrpides N."/>
            <person name="Anderson I.J."/>
            <person name="Miller C."/>
            <person name="Richardson P."/>
        </authorList>
    </citation>
    <scope>NUCLEOTIDE SEQUENCE [LARGE SCALE GENOMIC DNA]</scope>
    <source>
        <strain>DSM 7251 / JCM 13017 / BCRC 16820 / KCTC 9966 / NRRL B-24157 / PYR-1</strain>
    </source>
</reference>
<sequence>MSARAGIVVTGTEVLTGRVQDQNGPWLADRLLELGVELGHITLCGDRPADIEAQLRFLAGQGVDLIITSGGLGPTADDMTVEIVSRFCGRELVLDAAVEARIGEIVKGMMARFPGVDADAVLAANRKQALVPAGAVVLDPVGTAPGVVVAGSPTVVVLPGPPRELQPMWHAAVATDAVQTAIAGRTRYQQQTIRMFGLPESGLADTLRDAEKTVADFDRLEITTCLRRGELEIVTRFEPRDTATYAALEGLLRDRHAREIFSTDGALVDDQIAELLAGRSIATAESCTAGMLAARLTERAGSSAYVAGGVVAYSNAAKTELLGVDAGLIERHGAVSEPVAEAMAAGALQRFGADTAVAITGIAGPGGGTPTKPVGTVCFSVALAGGASVTRATRLPGNRSDIRERSTTVAMHLLRRALTGGG</sequence>
<gene>
    <name type="ordered locus">Mvan_2999</name>
</gene>
<accession>A1T9F4</accession>
<name>CINAL_MYCVP</name>
<protein>
    <recommendedName>
        <fullName evidence="1">CinA-like protein</fullName>
    </recommendedName>
</protein>
<feature type="chain" id="PRO_0000336512" description="CinA-like protein">
    <location>
        <begin position="1"/>
        <end position="422"/>
    </location>
</feature>
<dbReference type="EMBL" id="CP000511">
    <property type="protein sequence ID" value="ABM13804.1"/>
    <property type="molecule type" value="Genomic_DNA"/>
</dbReference>
<dbReference type="RefSeq" id="WP_011780209.1">
    <property type="nucleotide sequence ID" value="NZ_JACKSD010000339.1"/>
</dbReference>
<dbReference type="SMR" id="A1T9F4"/>
<dbReference type="STRING" id="350058.Mvan_2999"/>
<dbReference type="KEGG" id="mva:Mvan_2999"/>
<dbReference type="eggNOG" id="COG1058">
    <property type="taxonomic scope" value="Bacteria"/>
</dbReference>
<dbReference type="eggNOG" id="COG1546">
    <property type="taxonomic scope" value="Bacteria"/>
</dbReference>
<dbReference type="HOGENOM" id="CLU_030805_9_2_11"/>
<dbReference type="Proteomes" id="UP000009159">
    <property type="component" value="Chromosome"/>
</dbReference>
<dbReference type="CDD" id="cd00885">
    <property type="entry name" value="cinA"/>
    <property type="match status" value="1"/>
</dbReference>
<dbReference type="Gene3D" id="3.90.950.20">
    <property type="entry name" value="CinA-like"/>
    <property type="match status" value="1"/>
</dbReference>
<dbReference type="Gene3D" id="3.40.980.10">
    <property type="entry name" value="MoaB/Mog-like domain"/>
    <property type="match status" value="1"/>
</dbReference>
<dbReference type="HAMAP" id="MF_00226_B">
    <property type="entry name" value="CinA_B"/>
    <property type="match status" value="1"/>
</dbReference>
<dbReference type="InterPro" id="IPR050101">
    <property type="entry name" value="CinA"/>
</dbReference>
<dbReference type="InterPro" id="IPR036653">
    <property type="entry name" value="CinA-like_C"/>
</dbReference>
<dbReference type="InterPro" id="IPR008136">
    <property type="entry name" value="CinA_C"/>
</dbReference>
<dbReference type="InterPro" id="IPR008135">
    <property type="entry name" value="Competence-induced_CinA"/>
</dbReference>
<dbReference type="InterPro" id="IPR036425">
    <property type="entry name" value="MoaB/Mog-like_dom_sf"/>
</dbReference>
<dbReference type="InterPro" id="IPR001453">
    <property type="entry name" value="MoaB/Mog_dom"/>
</dbReference>
<dbReference type="NCBIfam" id="TIGR00200">
    <property type="entry name" value="cinA_nterm"/>
    <property type="match status" value="1"/>
</dbReference>
<dbReference type="NCBIfam" id="TIGR00199">
    <property type="entry name" value="PncC_domain"/>
    <property type="match status" value="1"/>
</dbReference>
<dbReference type="NCBIfam" id="NF001813">
    <property type="entry name" value="PRK00549.1"/>
    <property type="match status" value="1"/>
</dbReference>
<dbReference type="PANTHER" id="PTHR13939">
    <property type="entry name" value="NICOTINAMIDE-NUCLEOTIDE AMIDOHYDROLASE PNCC"/>
    <property type="match status" value="1"/>
</dbReference>
<dbReference type="PANTHER" id="PTHR13939:SF0">
    <property type="entry name" value="NMN AMIDOHYDROLASE-LIKE PROTEIN YFAY"/>
    <property type="match status" value="1"/>
</dbReference>
<dbReference type="Pfam" id="PF02464">
    <property type="entry name" value="CinA"/>
    <property type="match status" value="1"/>
</dbReference>
<dbReference type="Pfam" id="PF00994">
    <property type="entry name" value="MoCF_biosynth"/>
    <property type="match status" value="1"/>
</dbReference>
<dbReference type="PIRSF" id="PIRSF006728">
    <property type="entry name" value="CinA"/>
    <property type="match status" value="1"/>
</dbReference>
<dbReference type="SMART" id="SM00852">
    <property type="entry name" value="MoCF_biosynth"/>
    <property type="match status" value="1"/>
</dbReference>
<dbReference type="SUPFAM" id="SSF142433">
    <property type="entry name" value="CinA-like"/>
    <property type="match status" value="1"/>
</dbReference>
<dbReference type="SUPFAM" id="SSF53218">
    <property type="entry name" value="Molybdenum cofactor biosynthesis proteins"/>
    <property type="match status" value="1"/>
</dbReference>
<organism>
    <name type="scientific">Mycolicibacterium vanbaalenii (strain DSM 7251 / JCM 13017 / BCRC 16820 / KCTC 9966 / NRRL B-24157 / PYR-1)</name>
    <name type="common">Mycobacterium vanbaalenii</name>
    <dbReference type="NCBI Taxonomy" id="350058"/>
    <lineage>
        <taxon>Bacteria</taxon>
        <taxon>Bacillati</taxon>
        <taxon>Actinomycetota</taxon>
        <taxon>Actinomycetes</taxon>
        <taxon>Mycobacteriales</taxon>
        <taxon>Mycobacteriaceae</taxon>
        <taxon>Mycolicibacterium</taxon>
    </lineage>
</organism>
<proteinExistence type="inferred from homology"/>
<evidence type="ECO:0000255" key="1">
    <source>
        <dbReference type="HAMAP-Rule" id="MF_00226"/>
    </source>
</evidence>